<name>TBB2B_RAT</name>
<gene>
    <name type="primary">Tubb2b</name>
    <name type="synonym">Tubb2a</name>
</gene>
<reference key="1">
    <citation type="journal article" date="1985" name="EMBO J.">
        <title>Regulation of three beta-tubulin mRNAs during rat brain development.</title>
        <authorList>
            <person name="Ginzburg I."/>
            <person name="Teichman A."/>
            <person name="Dodemont H.J."/>
            <person name="Behar L."/>
            <person name="Littauer U.Z."/>
        </authorList>
    </citation>
    <scope>NUCLEOTIDE SEQUENCE [MRNA]</scope>
</reference>
<reference key="2">
    <citation type="journal article" date="2004" name="Genome Res.">
        <title>The status, quality, and expansion of the NIH full-length cDNA project: the Mammalian Gene Collection (MGC).</title>
        <authorList>
            <consortium name="The MGC Project Team"/>
        </authorList>
    </citation>
    <scope>NUCLEOTIDE SEQUENCE [LARGE SCALE MRNA]</scope>
    <source>
        <tissue>Prostate</tissue>
    </source>
</reference>
<reference key="3">
    <citation type="submission" date="2007-04" db="UniProtKB">
        <authorList>
            <person name="Lubec G."/>
            <person name="Chen W.-Q."/>
        </authorList>
    </citation>
    <scope>PROTEIN SEQUENCE OF 78-103; 263-276; 310-318 AND 381-390</scope>
    <scope>IDENTIFICATION BY MASS SPECTROMETRY</scope>
    <source>
        <strain>Sprague-Dawley</strain>
        <tissue>Hippocampus</tissue>
    </source>
</reference>
<reference key="4">
    <citation type="journal article" date="2009" name="Nat. Genet.">
        <title>Mutations in the beta-tubulin gene TUBB2B result in asymmetrical polymicrogyria.</title>
        <authorList>
            <person name="Jaglin X.H."/>
            <person name="Poirier K."/>
            <person name="Saillour Y."/>
            <person name="Buhler E."/>
            <person name="Tian G."/>
            <person name="Bahi-Buisson N."/>
            <person name="Fallet-Bianco C."/>
            <person name="Phan-Dinh-Tuy F."/>
            <person name="Kong X.P."/>
            <person name="Bomont P."/>
            <person name="Castelnau-Ptakhine L."/>
            <person name="Odent S."/>
            <person name="Loget P."/>
            <person name="Kossorotoff M."/>
            <person name="Snoeck I."/>
            <person name="Plessis G."/>
            <person name="Parent P."/>
            <person name="Beldjord C."/>
            <person name="Cardoso C."/>
            <person name="Represa A."/>
            <person name="Flint J."/>
            <person name="Keays D.A."/>
            <person name="Cowan N.J."/>
            <person name="Chelly J."/>
        </authorList>
    </citation>
    <scope>FUNCTION</scope>
</reference>
<reference key="5">
    <citation type="journal article" date="2012" name="Nat. Commun.">
        <title>Quantitative maps of protein phosphorylation sites across 14 different rat organs and tissues.</title>
        <authorList>
            <person name="Lundby A."/>
            <person name="Secher A."/>
            <person name="Lage K."/>
            <person name="Nordsborg N.B."/>
            <person name="Dmytriyev A."/>
            <person name="Lundby C."/>
            <person name="Olsen J.V."/>
        </authorList>
    </citation>
    <scope>PHOSPHORYLATION [LARGE SCALE ANALYSIS] AT THR-55</scope>
    <scope>IDENTIFICATION BY MASS SPECTROMETRY [LARGE SCALE ANALYSIS]</scope>
</reference>
<evidence type="ECO:0000250" key="1">
    <source>
        <dbReference type="UniProtKB" id="P07437"/>
    </source>
</evidence>
<evidence type="ECO:0000250" key="2">
    <source>
        <dbReference type="UniProtKB" id="P68363"/>
    </source>
</evidence>
<evidence type="ECO:0000250" key="3">
    <source>
        <dbReference type="UniProtKB" id="P99024"/>
    </source>
</evidence>
<evidence type="ECO:0000250" key="4">
    <source>
        <dbReference type="UniProtKB" id="Q13509"/>
    </source>
</evidence>
<evidence type="ECO:0000250" key="5">
    <source>
        <dbReference type="UniProtKB" id="Q2T9S0"/>
    </source>
</evidence>
<evidence type="ECO:0000250" key="6">
    <source>
        <dbReference type="UniProtKB" id="Q71U36"/>
    </source>
</evidence>
<evidence type="ECO:0000250" key="7">
    <source>
        <dbReference type="UniProtKB" id="Q9BVA1"/>
    </source>
</evidence>
<evidence type="ECO:0000250" key="8">
    <source>
        <dbReference type="UniProtKB" id="Q9CWF2"/>
    </source>
</evidence>
<evidence type="ECO:0000256" key="9">
    <source>
        <dbReference type="SAM" id="MobiDB-lite"/>
    </source>
</evidence>
<evidence type="ECO:0000269" key="10">
    <source>
    </source>
</evidence>
<evidence type="ECO:0000305" key="11"/>
<evidence type="ECO:0007744" key="12">
    <source>
    </source>
</evidence>
<comment type="function">
    <text evidence="7 10">Tubulin is the major constituent of microtubules, a cylinder consisting of laterally associated linear protofilaments composed of alpha- and beta-tubulin heterodimers (PubMed:19465910). Microtubules grow by the addition of GTP-tubulin dimers to the microtubule end, where a stabilizing cap forms. Below the cap, tubulin dimers are in GDP-bound state, owing to GTPase activity of alpha-tubulin. Plays a critical role in proper axon guidance in both central and peripheral axon tracts. Implicated in neuronal migration (By similarity).</text>
</comment>
<comment type="cofactor">
    <cofactor evidence="2">
        <name>Mg(2+)</name>
        <dbReference type="ChEBI" id="CHEBI:18420"/>
    </cofactor>
</comment>
<comment type="subunit">
    <text evidence="7">Dimer of alpha and beta chains. A typical microtubule is a hollow water-filled tube with an outer diameter of 25 nm and an inner diameter of 15 nM. Alpha-beta heterodimers associate head-to-tail to form protofilaments running lengthwise along the microtubule wall with the beta-tubulin subunit facing the microtubule plus end conferring a structural polarity. Microtubules usually have 13 protofilaments but different protofilament numbers can be found in some organisms and specialized cells.</text>
</comment>
<comment type="subcellular location">
    <subcellularLocation>
        <location evidence="7">Cytoplasm</location>
        <location evidence="7">Cytoskeleton</location>
    </subcellularLocation>
</comment>
<comment type="domain">
    <text evidence="1">The MREI motif is common among all beta-tubulin isoforms and may be critical for tubulin autoregulation.</text>
</comment>
<comment type="PTM">
    <text evidence="8">Some glutamate residues at the C-terminus are polyglycylated, resulting in polyglycine chains on the gamma-carboxyl group. Glycylation is mainly limited to tubulin incorporated into axonemes (cilia and flagella) whereas glutamylation is prevalent in neuronal cells, centrioles, axonemes, and the mitotic spindle. Both modifications can coexist on the same protein on adjacent residues, and lowering polyglycylation levels increases polyglutamylation, and reciprocally. Cilia and flagella glycylation is required for their stability and maintenance. Flagella glycylation controls sperm motility.</text>
</comment>
<comment type="PTM">
    <text evidence="6 8">Some glutamate residues at the C-terminus are polyglutamylated, resulting in polyglutamate chains on the gamma-carboxyl group (By similarity). Polyglutamylation plays a key role in microtubule severing by spastin (SPAST). SPAST preferentially recognizes and acts on microtubules decorated with short polyglutamate tails: severing activity by SPAST increases as the number of glutamates per tubulin rises from one to eight, but decreases beyond this glutamylation threshold (By similarity). Glutamylation is also involved in cilia motility (By similarity).</text>
</comment>
<comment type="PTM">
    <text evidence="7">Phosphorylated on Ser-172 by CDK1 during the cell cycle, from metaphase to telophase, but not in interphase. This phosphorylation inhibits tubulin incorporation into microtubules.</text>
</comment>
<comment type="similarity">
    <text evidence="11">Belongs to the tubulin family.</text>
</comment>
<accession>Q3KRE8</accession>
<accession>A3KMR7</accession>
<accession>P04691</accession>
<protein>
    <recommendedName>
        <fullName>Tubulin beta-2B chain</fullName>
    </recommendedName>
    <alternativeName>
        <fullName>T beta-15</fullName>
    </alternativeName>
</protein>
<dbReference type="EMBL" id="X03369">
    <property type="protein sequence ID" value="CAA27067.1"/>
    <property type="molecule type" value="mRNA"/>
</dbReference>
<dbReference type="EMBL" id="BC105754">
    <property type="protein sequence ID" value="AAI05755.1"/>
    <property type="molecule type" value="mRNA"/>
</dbReference>
<dbReference type="PIR" id="A25113">
    <property type="entry name" value="A25113"/>
</dbReference>
<dbReference type="RefSeq" id="NP_001013908.2">
    <property type="nucleotide sequence ID" value="NM_001013886.2"/>
</dbReference>
<dbReference type="SMR" id="Q3KRE8"/>
<dbReference type="BioGRID" id="253414">
    <property type="interactions" value="7"/>
</dbReference>
<dbReference type="FunCoup" id="Q3KRE8">
    <property type="interactions" value="1087"/>
</dbReference>
<dbReference type="IntAct" id="Q3KRE8">
    <property type="interactions" value="7"/>
</dbReference>
<dbReference type="MINT" id="Q3KRE8"/>
<dbReference type="STRING" id="10116.ENSRNOP00000023582"/>
<dbReference type="GlyGen" id="Q3KRE8">
    <property type="glycosylation" value="1 site, 1 O-linked glycan (1 site)"/>
</dbReference>
<dbReference type="iPTMnet" id="Q3KRE8"/>
<dbReference type="PhosphoSitePlus" id="Q3KRE8"/>
<dbReference type="SwissPalm" id="Q3KRE8"/>
<dbReference type="jPOST" id="Q3KRE8"/>
<dbReference type="PaxDb" id="10116-ENSRNOP00000023582"/>
<dbReference type="GeneID" id="291081"/>
<dbReference type="KEGG" id="rno:291081"/>
<dbReference type="UCSC" id="RGD:1309427">
    <property type="organism name" value="rat"/>
</dbReference>
<dbReference type="AGR" id="RGD:1309427"/>
<dbReference type="CTD" id="347733"/>
<dbReference type="RGD" id="1309427">
    <property type="gene designation" value="Tubb2b"/>
</dbReference>
<dbReference type="VEuPathDB" id="HostDB:ENSRNOG00000017445"/>
<dbReference type="VEuPathDB" id="HostDB:ENSRNOG00000017558"/>
<dbReference type="eggNOG" id="KOG1375">
    <property type="taxonomic scope" value="Eukaryota"/>
</dbReference>
<dbReference type="InParanoid" id="Q3KRE8"/>
<dbReference type="OrthoDB" id="9569079at2759"/>
<dbReference type="PhylomeDB" id="Q3KRE8"/>
<dbReference type="TreeFam" id="TF300298"/>
<dbReference type="Reactome" id="R-RNO-190840">
    <property type="pathway name" value="Microtubule-dependent trafficking of connexons from Golgi to the plasma membrane"/>
</dbReference>
<dbReference type="Reactome" id="R-RNO-2132295">
    <property type="pathway name" value="MHC class II antigen presentation"/>
</dbReference>
<dbReference type="Reactome" id="R-RNO-2467813">
    <property type="pathway name" value="Separation of Sister Chromatids"/>
</dbReference>
<dbReference type="Reactome" id="R-RNO-2500257">
    <property type="pathway name" value="Resolution of Sister Chromatid Cohesion"/>
</dbReference>
<dbReference type="Reactome" id="R-RNO-3371497">
    <property type="pathway name" value="HSP90 chaperone cycle for steroid hormone receptors (SHR) in the presence of ligand"/>
</dbReference>
<dbReference type="Reactome" id="R-RNO-380320">
    <property type="pathway name" value="Recruitment of NuMA to mitotic centrosomes"/>
</dbReference>
<dbReference type="Reactome" id="R-RNO-437239">
    <property type="pathway name" value="Recycling pathway of L1"/>
</dbReference>
<dbReference type="Reactome" id="R-RNO-5610787">
    <property type="pathway name" value="Hedgehog 'off' state"/>
</dbReference>
<dbReference type="Reactome" id="R-RNO-5617833">
    <property type="pathway name" value="Cilium Assembly"/>
</dbReference>
<dbReference type="Reactome" id="R-RNO-5620924">
    <property type="pathway name" value="Intraflagellar transport"/>
</dbReference>
<dbReference type="Reactome" id="R-RNO-5626467">
    <property type="pathway name" value="RHO GTPases activate IQGAPs"/>
</dbReference>
<dbReference type="Reactome" id="R-RNO-5663220">
    <property type="pathway name" value="RHO GTPases Activate Formins"/>
</dbReference>
<dbReference type="Reactome" id="R-RNO-6807878">
    <property type="pathway name" value="COPI-mediated anterograde transport"/>
</dbReference>
<dbReference type="Reactome" id="R-RNO-6811434">
    <property type="pathway name" value="COPI-dependent Golgi-to-ER retrograde traffic"/>
</dbReference>
<dbReference type="Reactome" id="R-RNO-6811436">
    <property type="pathway name" value="COPI-independent Golgi-to-ER retrograde traffic"/>
</dbReference>
<dbReference type="Reactome" id="R-RNO-68877">
    <property type="pathway name" value="Mitotic Prometaphase"/>
</dbReference>
<dbReference type="Reactome" id="R-RNO-8852276">
    <property type="pathway name" value="The role of GTSE1 in G2/M progression after G2 checkpoint"/>
</dbReference>
<dbReference type="Reactome" id="R-RNO-8955332">
    <property type="pathway name" value="Carboxyterminal post-translational modifications of tubulin"/>
</dbReference>
<dbReference type="Reactome" id="R-RNO-9646399">
    <property type="pathway name" value="Aggrephagy"/>
</dbReference>
<dbReference type="Reactome" id="R-RNO-9648025">
    <property type="pathway name" value="EML4 and NUDC in mitotic spindle formation"/>
</dbReference>
<dbReference type="Reactome" id="R-RNO-9668328">
    <property type="pathway name" value="Sealing of the nuclear envelope (NE) by ESCRT-III"/>
</dbReference>
<dbReference type="Reactome" id="R-RNO-983189">
    <property type="pathway name" value="Kinesins"/>
</dbReference>
<dbReference type="Reactome" id="R-RNO-9833482">
    <property type="pathway name" value="PKR-mediated signaling"/>
</dbReference>
<dbReference type="PRO" id="PR:Q3KRE8"/>
<dbReference type="Proteomes" id="UP000002494">
    <property type="component" value="Chromosome 17"/>
</dbReference>
<dbReference type="Bgee" id="ENSRNOG00000017445">
    <property type="expression patterns" value="Expressed in frontal cortex and 20 other cell types or tissues"/>
</dbReference>
<dbReference type="GO" id="GO:0005737">
    <property type="term" value="C:cytoplasm"/>
    <property type="evidence" value="ECO:0000318"/>
    <property type="project" value="GO_Central"/>
</dbReference>
<dbReference type="GO" id="GO:0005874">
    <property type="term" value="C:microtubule"/>
    <property type="evidence" value="ECO:0000266"/>
    <property type="project" value="RGD"/>
</dbReference>
<dbReference type="GO" id="GO:0015630">
    <property type="term" value="C:microtubule cytoskeleton"/>
    <property type="evidence" value="ECO:0000250"/>
    <property type="project" value="UniProtKB"/>
</dbReference>
<dbReference type="GO" id="GO:0098685">
    <property type="term" value="C:Schaffer collateral - CA1 synapse"/>
    <property type="evidence" value="ECO:0000266"/>
    <property type="project" value="RGD"/>
</dbReference>
<dbReference type="GO" id="GO:0005525">
    <property type="term" value="F:GTP binding"/>
    <property type="evidence" value="ECO:0000318"/>
    <property type="project" value="GO_Central"/>
</dbReference>
<dbReference type="GO" id="GO:0003924">
    <property type="term" value="F:GTPase activity"/>
    <property type="evidence" value="ECO:0007669"/>
    <property type="project" value="InterPro"/>
</dbReference>
<dbReference type="GO" id="GO:0046872">
    <property type="term" value="F:metal ion binding"/>
    <property type="evidence" value="ECO:0007669"/>
    <property type="project" value="UniProtKB-KW"/>
</dbReference>
<dbReference type="GO" id="GO:0046982">
    <property type="term" value="F:protein heterodimerization activity"/>
    <property type="evidence" value="ECO:0000250"/>
    <property type="project" value="UniProtKB"/>
</dbReference>
<dbReference type="GO" id="GO:0005200">
    <property type="term" value="F:structural constituent of cytoskeleton"/>
    <property type="evidence" value="ECO:0000318"/>
    <property type="project" value="GO_Central"/>
</dbReference>
<dbReference type="GO" id="GO:0021987">
    <property type="term" value="P:cerebral cortex development"/>
    <property type="evidence" value="ECO:0000266"/>
    <property type="project" value="RGD"/>
</dbReference>
<dbReference type="GO" id="GO:1990403">
    <property type="term" value="P:embryonic brain development"/>
    <property type="evidence" value="ECO:0000266"/>
    <property type="project" value="RGD"/>
</dbReference>
<dbReference type="GO" id="GO:0000226">
    <property type="term" value="P:microtubule cytoskeleton organization"/>
    <property type="evidence" value="ECO:0000318"/>
    <property type="project" value="GO_Central"/>
</dbReference>
<dbReference type="GO" id="GO:0007017">
    <property type="term" value="P:microtubule-based process"/>
    <property type="evidence" value="ECO:0000250"/>
    <property type="project" value="UniProtKB"/>
</dbReference>
<dbReference type="GO" id="GO:0000278">
    <property type="term" value="P:mitotic cell cycle"/>
    <property type="evidence" value="ECO:0000318"/>
    <property type="project" value="GO_Central"/>
</dbReference>
<dbReference type="GO" id="GO:0050804">
    <property type="term" value="P:modulation of chemical synaptic transmission"/>
    <property type="evidence" value="ECO:0000266"/>
    <property type="project" value="RGD"/>
</dbReference>
<dbReference type="GO" id="GO:0001764">
    <property type="term" value="P:neuron migration"/>
    <property type="evidence" value="ECO:0000315"/>
    <property type="project" value="UniProtKB"/>
</dbReference>
<dbReference type="GO" id="GO:1902669">
    <property type="term" value="P:positive regulation of axon guidance"/>
    <property type="evidence" value="ECO:0000250"/>
    <property type="project" value="UniProtKB"/>
</dbReference>
<dbReference type="CDD" id="cd02187">
    <property type="entry name" value="beta_tubulin"/>
    <property type="match status" value="1"/>
</dbReference>
<dbReference type="FunFam" id="1.10.287.600:FF:000006">
    <property type="entry name" value="Tubulin beta chain"/>
    <property type="match status" value="1"/>
</dbReference>
<dbReference type="FunFam" id="3.30.1330.20:FF:000002">
    <property type="entry name" value="Tubulin beta chain"/>
    <property type="match status" value="1"/>
</dbReference>
<dbReference type="FunFam" id="3.40.50.1440:FF:000003">
    <property type="entry name" value="Tubulin beta chain"/>
    <property type="match status" value="1"/>
</dbReference>
<dbReference type="Gene3D" id="1.10.287.600">
    <property type="entry name" value="Helix hairpin bin"/>
    <property type="match status" value="1"/>
</dbReference>
<dbReference type="Gene3D" id="3.30.1330.20">
    <property type="entry name" value="Tubulin/FtsZ, C-terminal domain"/>
    <property type="match status" value="1"/>
</dbReference>
<dbReference type="Gene3D" id="3.40.50.1440">
    <property type="entry name" value="Tubulin/FtsZ, GTPase domain"/>
    <property type="match status" value="1"/>
</dbReference>
<dbReference type="InterPro" id="IPR013838">
    <property type="entry name" value="Beta-tubulin_BS"/>
</dbReference>
<dbReference type="InterPro" id="IPR002453">
    <property type="entry name" value="Beta_tubulin"/>
</dbReference>
<dbReference type="InterPro" id="IPR008280">
    <property type="entry name" value="Tub_FtsZ_C"/>
</dbReference>
<dbReference type="InterPro" id="IPR000217">
    <property type="entry name" value="Tubulin"/>
</dbReference>
<dbReference type="InterPro" id="IPR037103">
    <property type="entry name" value="Tubulin/FtsZ-like_C"/>
</dbReference>
<dbReference type="InterPro" id="IPR018316">
    <property type="entry name" value="Tubulin/FtsZ_2-layer-sand-dom"/>
</dbReference>
<dbReference type="InterPro" id="IPR036525">
    <property type="entry name" value="Tubulin/FtsZ_GTPase_sf"/>
</dbReference>
<dbReference type="InterPro" id="IPR023123">
    <property type="entry name" value="Tubulin_C"/>
</dbReference>
<dbReference type="InterPro" id="IPR017975">
    <property type="entry name" value="Tubulin_CS"/>
</dbReference>
<dbReference type="InterPro" id="IPR003008">
    <property type="entry name" value="Tubulin_FtsZ_GTPase"/>
</dbReference>
<dbReference type="PANTHER" id="PTHR11588">
    <property type="entry name" value="TUBULIN"/>
    <property type="match status" value="1"/>
</dbReference>
<dbReference type="Pfam" id="PF00091">
    <property type="entry name" value="Tubulin"/>
    <property type="match status" value="1"/>
</dbReference>
<dbReference type="Pfam" id="PF03953">
    <property type="entry name" value="Tubulin_C"/>
    <property type="match status" value="1"/>
</dbReference>
<dbReference type="PRINTS" id="PR01163">
    <property type="entry name" value="BETATUBULIN"/>
</dbReference>
<dbReference type="PRINTS" id="PR01161">
    <property type="entry name" value="TUBULIN"/>
</dbReference>
<dbReference type="SMART" id="SM00864">
    <property type="entry name" value="Tubulin"/>
    <property type="match status" value="1"/>
</dbReference>
<dbReference type="SMART" id="SM00865">
    <property type="entry name" value="Tubulin_C"/>
    <property type="match status" value="1"/>
</dbReference>
<dbReference type="SUPFAM" id="SSF55307">
    <property type="entry name" value="Tubulin C-terminal domain-like"/>
    <property type="match status" value="1"/>
</dbReference>
<dbReference type="SUPFAM" id="SSF52490">
    <property type="entry name" value="Tubulin nucleotide-binding domain-like"/>
    <property type="match status" value="1"/>
</dbReference>
<dbReference type="PROSITE" id="PS00227">
    <property type="entry name" value="TUBULIN"/>
    <property type="match status" value="1"/>
</dbReference>
<dbReference type="PROSITE" id="PS00228">
    <property type="entry name" value="TUBULIN_B_AUTOREG"/>
    <property type="match status" value="1"/>
</dbReference>
<keyword id="KW-0007">Acetylation</keyword>
<keyword id="KW-0963">Cytoplasm</keyword>
<keyword id="KW-0206">Cytoskeleton</keyword>
<keyword id="KW-0903">Direct protein sequencing</keyword>
<keyword id="KW-0342">GTP-binding</keyword>
<keyword id="KW-1017">Isopeptide bond</keyword>
<keyword id="KW-0460">Magnesium</keyword>
<keyword id="KW-0479">Metal-binding</keyword>
<keyword id="KW-0488">Methylation</keyword>
<keyword id="KW-0493">Microtubule</keyword>
<keyword id="KW-0524">Neurogenesis</keyword>
<keyword id="KW-0547">Nucleotide-binding</keyword>
<keyword id="KW-0597">Phosphoprotein</keyword>
<keyword id="KW-1185">Reference proteome</keyword>
<keyword id="KW-0832">Ubl conjugation</keyword>
<proteinExistence type="evidence at protein level"/>
<organism>
    <name type="scientific">Rattus norvegicus</name>
    <name type="common">Rat</name>
    <dbReference type="NCBI Taxonomy" id="10116"/>
    <lineage>
        <taxon>Eukaryota</taxon>
        <taxon>Metazoa</taxon>
        <taxon>Chordata</taxon>
        <taxon>Craniata</taxon>
        <taxon>Vertebrata</taxon>
        <taxon>Euteleostomi</taxon>
        <taxon>Mammalia</taxon>
        <taxon>Eutheria</taxon>
        <taxon>Euarchontoglires</taxon>
        <taxon>Glires</taxon>
        <taxon>Rodentia</taxon>
        <taxon>Myomorpha</taxon>
        <taxon>Muroidea</taxon>
        <taxon>Muridae</taxon>
        <taxon>Murinae</taxon>
        <taxon>Rattus</taxon>
    </lineage>
</organism>
<sequence>MREIVHIQAGQCGNQIGAKFWEVISDEHGIDPTGSYHGDSDLQLERINVYYNEATGNKYVPRAILVDLEPGTMDSVRSGPFGQIFRPDNFVFGQSGAGNNWAKGHYTEGAELVDSVLDVVRKESESCDCLQGFQLTHSLGGGTGSGMGTLLISKIREEYPDRIMNTFSVMPSPKVSDTVVEPYNATLSVHQLVENTDETYCIDNEALYDICFRTLKLTTPTYGDLNHLVSATMSGVTTCLRFPGQLNADLRKLAVNMVPFPRLHFFMPGFAPLTSRGSQQYRALTVPELTQQMFDSKNMMAACDPRHGRYLTVAAIFRGRMSMKEVDEQMLNVQNKNSSYFVEWIPNNVKTAVCDIPPRGLKMSATFIGNSTAIQELFKRISEQFTAMFRRKAFLHWYTGEGMDEMEFTEAESNMNDLVSEYQQYQDATADEQGEFEEEEGEDEA</sequence>
<feature type="chain" id="PRO_0000262653" description="Tubulin beta-2B chain">
    <location>
        <begin position="1"/>
        <end position="445"/>
    </location>
</feature>
<feature type="region of interest" description="Disordered" evidence="9">
    <location>
        <begin position="422"/>
        <end position="445"/>
    </location>
</feature>
<feature type="short sequence motif" description="MREI motif" evidence="1">
    <location>
        <begin position="1"/>
        <end position="4"/>
    </location>
</feature>
<feature type="compositionally biased region" description="Acidic residues" evidence="9">
    <location>
        <begin position="429"/>
        <end position="445"/>
    </location>
</feature>
<feature type="binding site" evidence="4">
    <location>
        <position position="11"/>
    </location>
    <ligand>
        <name>GTP</name>
        <dbReference type="ChEBI" id="CHEBI:37565"/>
    </ligand>
</feature>
<feature type="binding site" evidence="2">
    <location>
        <position position="69"/>
    </location>
    <ligand>
        <name>GTP</name>
        <dbReference type="ChEBI" id="CHEBI:37565"/>
    </ligand>
</feature>
<feature type="binding site" evidence="2">
    <location>
        <position position="69"/>
    </location>
    <ligand>
        <name>Mg(2+)</name>
        <dbReference type="ChEBI" id="CHEBI:18420"/>
    </ligand>
</feature>
<feature type="binding site" evidence="4">
    <location>
        <position position="138"/>
    </location>
    <ligand>
        <name>GTP</name>
        <dbReference type="ChEBI" id="CHEBI:37565"/>
    </ligand>
</feature>
<feature type="binding site" evidence="4">
    <location>
        <position position="142"/>
    </location>
    <ligand>
        <name>GTP</name>
        <dbReference type="ChEBI" id="CHEBI:37565"/>
    </ligand>
</feature>
<feature type="binding site" evidence="4">
    <location>
        <position position="143"/>
    </location>
    <ligand>
        <name>GTP</name>
        <dbReference type="ChEBI" id="CHEBI:37565"/>
    </ligand>
</feature>
<feature type="binding site" evidence="4">
    <location>
        <position position="144"/>
    </location>
    <ligand>
        <name>GTP</name>
        <dbReference type="ChEBI" id="CHEBI:37565"/>
    </ligand>
</feature>
<feature type="binding site" evidence="4">
    <location>
        <position position="204"/>
    </location>
    <ligand>
        <name>GTP</name>
        <dbReference type="ChEBI" id="CHEBI:37565"/>
    </ligand>
</feature>
<feature type="binding site" evidence="4">
    <location>
        <position position="226"/>
    </location>
    <ligand>
        <name>GTP</name>
        <dbReference type="ChEBI" id="CHEBI:37565"/>
    </ligand>
</feature>
<feature type="modified residue" description="Phosphoserine" evidence="3">
    <location>
        <position position="40"/>
    </location>
</feature>
<feature type="modified residue" description="Phosphothreonine" evidence="12">
    <location>
        <position position="55"/>
    </location>
</feature>
<feature type="modified residue" description="N6-acetyllysine; alternate" evidence="1">
    <location>
        <position position="58"/>
    </location>
</feature>
<feature type="modified residue" description="N6-succinyllysine; alternate" evidence="3">
    <location>
        <position position="58"/>
    </location>
</feature>
<feature type="modified residue" description="Phosphoserine; by CDK1" evidence="7">
    <location>
        <position position="172"/>
    </location>
</feature>
<feature type="modified residue" description="Phosphothreonine" evidence="1">
    <location>
        <position position="285"/>
    </location>
</feature>
<feature type="modified residue" description="Phosphothreonine" evidence="1">
    <location>
        <position position="290"/>
    </location>
</feature>
<feature type="modified residue" description="Omega-N-methylarginine" evidence="1">
    <location>
        <position position="318"/>
    </location>
</feature>
<feature type="modified residue" description="5-glutamyl polyglutamate" evidence="5">
    <location>
        <position position="438"/>
    </location>
</feature>
<feature type="cross-link" description="Glycyl lysine isopeptide (Lys-Gly) (interchain with G-Cter in ubiquitin); alternate" evidence="1">
    <location>
        <position position="58"/>
    </location>
</feature>
<feature type="cross-link" description="Glycyl lysine isopeptide (Lys-Gly) (interchain with G-Cter in ubiquitin)" evidence="1">
    <location>
        <position position="324"/>
    </location>
</feature>
<feature type="sequence conflict" description="In Ref. 1; CAA27067." evidence="11" ref="1">
    <original>A</original>
    <variation>P</variation>
    <location>
        <position position="18"/>
    </location>
</feature>
<feature type="sequence conflict" description="In Ref. 1; CAA27067." evidence="11" ref="1">
    <original>T</original>
    <variation>A</variation>
    <location>
        <position position="55"/>
    </location>
</feature>
<feature type="sequence conflict" description="In Ref. 1; CAA27067." evidence="11" ref="1">
    <original>D</original>
    <variation>E</variation>
    <location>
        <position position="417"/>
    </location>
</feature>